<protein>
    <recommendedName>
        <fullName evidence="1">Histidine--tRNA ligase</fullName>
        <ecNumber evidence="1">6.1.1.21</ecNumber>
    </recommendedName>
    <alternativeName>
        <fullName evidence="1">Histidyl-tRNA synthetase</fullName>
        <shortName evidence="1">HisRS</shortName>
    </alternativeName>
</protein>
<keyword id="KW-0030">Aminoacyl-tRNA synthetase</keyword>
<keyword id="KW-0067">ATP-binding</keyword>
<keyword id="KW-0963">Cytoplasm</keyword>
<keyword id="KW-0436">Ligase</keyword>
<keyword id="KW-0547">Nucleotide-binding</keyword>
<keyword id="KW-0648">Protein biosynthesis</keyword>
<evidence type="ECO:0000255" key="1">
    <source>
        <dbReference type="HAMAP-Rule" id="MF_00127"/>
    </source>
</evidence>
<name>SYH_SACI1</name>
<accession>C3NFX3</accession>
<reference key="1">
    <citation type="journal article" date="2009" name="Proc. Natl. Acad. Sci. U.S.A.">
        <title>Biogeography of the Sulfolobus islandicus pan-genome.</title>
        <authorList>
            <person name="Reno M.L."/>
            <person name="Held N.L."/>
            <person name="Fields C.J."/>
            <person name="Burke P.V."/>
            <person name="Whitaker R.J."/>
        </authorList>
    </citation>
    <scope>NUCLEOTIDE SEQUENCE [LARGE SCALE GENOMIC DNA]</scope>
    <source>
        <strain>Y.N.15.51 / Yellowstone #2</strain>
    </source>
</reference>
<comment type="catalytic activity">
    <reaction evidence="1">
        <text>tRNA(His) + L-histidine + ATP = L-histidyl-tRNA(His) + AMP + diphosphate + H(+)</text>
        <dbReference type="Rhea" id="RHEA:17313"/>
        <dbReference type="Rhea" id="RHEA-COMP:9665"/>
        <dbReference type="Rhea" id="RHEA-COMP:9689"/>
        <dbReference type="ChEBI" id="CHEBI:15378"/>
        <dbReference type="ChEBI" id="CHEBI:30616"/>
        <dbReference type="ChEBI" id="CHEBI:33019"/>
        <dbReference type="ChEBI" id="CHEBI:57595"/>
        <dbReference type="ChEBI" id="CHEBI:78442"/>
        <dbReference type="ChEBI" id="CHEBI:78527"/>
        <dbReference type="ChEBI" id="CHEBI:456215"/>
        <dbReference type="EC" id="6.1.1.21"/>
    </reaction>
</comment>
<comment type="subcellular location">
    <subcellularLocation>
        <location evidence="1">Cytoplasm</location>
    </subcellularLocation>
</comment>
<comment type="similarity">
    <text evidence="1">Belongs to the class-II aminoacyl-tRNA synthetase family.</text>
</comment>
<organism>
    <name type="scientific">Saccharolobus islandicus (strain Y.N.15.51 / Yellowstone #2)</name>
    <name type="common">Sulfolobus islandicus</name>
    <dbReference type="NCBI Taxonomy" id="419942"/>
    <lineage>
        <taxon>Archaea</taxon>
        <taxon>Thermoproteota</taxon>
        <taxon>Thermoprotei</taxon>
        <taxon>Sulfolobales</taxon>
        <taxon>Sulfolobaceae</taxon>
        <taxon>Saccharolobus</taxon>
    </lineage>
</organism>
<feature type="chain" id="PRO_1000203152" description="Histidine--tRNA ligase">
    <location>
        <begin position="1"/>
        <end position="426"/>
    </location>
</feature>
<gene>
    <name evidence="1" type="primary">hisS</name>
    <name type="ordered locus">YN1551_0983</name>
</gene>
<sequence>MTKFETVRGMKDYIGIDAEKIRYLESTFRDLAIKYGYSEIITPVVEEFKLFALKGGEELRETMYVFKDKADRELSLRPEITPSVARAYIQNLQSSPKPIRLFYFGTVYRYDEPQYGRYREFRQAGIEMIGDSSILADLEVLDLLYNFYDKLNLSNDITIKINNIGIFRKIMDKYNIEDNLQEHILHLIDKNKINEALDILEKNLKNKDIIDFFYKILTKKDTKLEDIESLAELEEVSRLDIKSEFLYLFRLSRILSDLNIKFKIDLGFVRGLAYYTGLIFEVLHPSVQFSIAGGGRYDKLIELYGGLPSPAIGFAIGVERTLLVIKDLKVEEPVNVIVIGMSEDTIPSMFMVSRILRKEEYKVVINTKDQPLSKLLPYYASQGFKVAIIIGKQELEKNMITVRNLITRKQISVPLENIEDAIKQTL</sequence>
<dbReference type="EC" id="6.1.1.21" evidence="1"/>
<dbReference type="EMBL" id="CP001404">
    <property type="protein sequence ID" value="ACP48091.1"/>
    <property type="molecule type" value="Genomic_DNA"/>
</dbReference>
<dbReference type="RefSeq" id="WP_012717294.1">
    <property type="nucleotide sequence ID" value="NC_012623.1"/>
</dbReference>
<dbReference type="SMR" id="C3NFX3"/>
<dbReference type="GeneID" id="7809593"/>
<dbReference type="KEGG" id="sin:YN1551_0983"/>
<dbReference type="HOGENOM" id="CLU_025113_3_1_2"/>
<dbReference type="Proteomes" id="UP000006818">
    <property type="component" value="Chromosome"/>
</dbReference>
<dbReference type="GO" id="GO:0005737">
    <property type="term" value="C:cytoplasm"/>
    <property type="evidence" value="ECO:0007669"/>
    <property type="project" value="UniProtKB-SubCell"/>
</dbReference>
<dbReference type="GO" id="GO:0005524">
    <property type="term" value="F:ATP binding"/>
    <property type="evidence" value="ECO:0007669"/>
    <property type="project" value="UniProtKB-UniRule"/>
</dbReference>
<dbReference type="GO" id="GO:0004821">
    <property type="term" value="F:histidine-tRNA ligase activity"/>
    <property type="evidence" value="ECO:0007669"/>
    <property type="project" value="UniProtKB-UniRule"/>
</dbReference>
<dbReference type="GO" id="GO:0006427">
    <property type="term" value="P:histidyl-tRNA aminoacylation"/>
    <property type="evidence" value="ECO:0007669"/>
    <property type="project" value="UniProtKB-UniRule"/>
</dbReference>
<dbReference type="GO" id="GO:0000105">
    <property type="term" value="P:L-histidine biosynthetic process"/>
    <property type="evidence" value="ECO:0007669"/>
    <property type="project" value="InterPro"/>
</dbReference>
<dbReference type="CDD" id="cd00773">
    <property type="entry name" value="HisRS-like_core"/>
    <property type="match status" value="1"/>
</dbReference>
<dbReference type="FunFam" id="3.30.930.10:FF:000121">
    <property type="entry name" value="Histidine--tRNA ligase"/>
    <property type="match status" value="1"/>
</dbReference>
<dbReference type="Gene3D" id="3.40.50.800">
    <property type="entry name" value="Anticodon-binding domain"/>
    <property type="match status" value="1"/>
</dbReference>
<dbReference type="Gene3D" id="3.30.930.10">
    <property type="entry name" value="Bira Bifunctional Protein, Domain 2"/>
    <property type="match status" value="1"/>
</dbReference>
<dbReference type="HAMAP" id="MF_00127">
    <property type="entry name" value="His_tRNA_synth"/>
    <property type="match status" value="1"/>
</dbReference>
<dbReference type="HAMAP" id="MF_00125">
    <property type="entry name" value="HisZ"/>
    <property type="match status" value="1"/>
</dbReference>
<dbReference type="InterPro" id="IPR006195">
    <property type="entry name" value="aa-tRNA-synth_II"/>
</dbReference>
<dbReference type="InterPro" id="IPR045864">
    <property type="entry name" value="aa-tRNA-synth_II/BPL/LPL"/>
</dbReference>
<dbReference type="InterPro" id="IPR004154">
    <property type="entry name" value="Anticodon-bd"/>
</dbReference>
<dbReference type="InterPro" id="IPR036621">
    <property type="entry name" value="Anticodon-bd_dom_sf"/>
</dbReference>
<dbReference type="InterPro" id="IPR015807">
    <property type="entry name" value="His-tRNA-ligase"/>
</dbReference>
<dbReference type="InterPro" id="IPR041715">
    <property type="entry name" value="HisRS-like_core"/>
</dbReference>
<dbReference type="InterPro" id="IPR004516">
    <property type="entry name" value="HisRS/HisZ"/>
</dbReference>
<dbReference type="InterPro" id="IPR004517">
    <property type="entry name" value="HisZ"/>
</dbReference>
<dbReference type="NCBIfam" id="TIGR00442">
    <property type="entry name" value="hisS"/>
    <property type="match status" value="1"/>
</dbReference>
<dbReference type="PANTHER" id="PTHR43707:SF1">
    <property type="entry name" value="HISTIDINE--TRNA LIGASE, MITOCHONDRIAL-RELATED"/>
    <property type="match status" value="1"/>
</dbReference>
<dbReference type="PANTHER" id="PTHR43707">
    <property type="entry name" value="HISTIDYL-TRNA SYNTHETASE"/>
    <property type="match status" value="1"/>
</dbReference>
<dbReference type="Pfam" id="PF03129">
    <property type="entry name" value="HGTP_anticodon"/>
    <property type="match status" value="1"/>
</dbReference>
<dbReference type="Pfam" id="PF13393">
    <property type="entry name" value="tRNA-synt_His"/>
    <property type="match status" value="1"/>
</dbReference>
<dbReference type="PIRSF" id="PIRSF001549">
    <property type="entry name" value="His-tRNA_synth"/>
    <property type="match status" value="1"/>
</dbReference>
<dbReference type="SUPFAM" id="SSF52954">
    <property type="entry name" value="Class II aaRS ABD-related"/>
    <property type="match status" value="1"/>
</dbReference>
<dbReference type="SUPFAM" id="SSF55681">
    <property type="entry name" value="Class II aaRS and biotin synthetases"/>
    <property type="match status" value="1"/>
</dbReference>
<dbReference type="PROSITE" id="PS50862">
    <property type="entry name" value="AA_TRNA_LIGASE_II"/>
    <property type="match status" value="1"/>
</dbReference>
<proteinExistence type="inferred from homology"/>